<comment type="function">
    <text evidence="3 4">May act as a scaffolding protein within caveolar membranes. Forms a stable heterooligomeric complex with CAV2 that targets to lipid rafts and drives caveolae formation. Mediates the recruitment of CAVIN proteins (CAVIN1/2/3/4) to the caveolae (By similarity). Interacts directly with G-protein alpha subunits and can functionally regulate their activity (By similarity). Involved in the costimulatory signal essential for T-cell receptor (TCR)-mediated T-cell activation. Its binding to DPP4 induces T-cell proliferation and NF-kappa-B activation in a T-cell receptor/CD3-dependent manner (By similarity). Recruits CTNNB1 to caveolar membranes and may regulate CTNNB1-mediated signaling through the Wnt pathway (By similarity). Negatively regulates TGFB1-mediated activation of SMAD2/3 by mediating the internalization of TGFBR1 from membrane rafts leading to its subsequent degradation (By similarity). Binds 20(S)-hydroxycholesterol (20(S)-OHC) (By similarity).</text>
</comment>
<comment type="subunit">
    <text evidence="2 3 4 5">Homooligomer. Interacts with GLIPR2. Interacts with NOSTRIN (By similarity). Interacts with SNAP25 and STX1A (By similarity). Interacts (via the N-terminus) with DPP4; the interaction is direct (By similarity). Interacts with CTNNB1, CDH1 and JUP. Interacts with PACSIN2; this interaction induces membrane tubulation (By similarity). Interacts with SLC7A9 (By similarity). Interacts with BMX and BTK. Interacts with TGFBR1. Interacts with CAVIN3 (via leucine-zipper domain) in a cholesterol-sensitive manner. Interacts with CAVIN1. Interacts with EHD2 in a cholesterol-dependent manner. Forms a ternary complex with UBXN6 and VCP; mediates CAV1 targeting to lysosomes for degradation. Interacts with ABCG1; this interaction regulates ABCG1-mediated cholesterol efflux (By similarity). Interacts with NEU3; this interaction enhances NEU3 sialidase activity within caveola. Interacts (via C-terminus) with SPRY1, SPRY2 (via C-terminus), SPRY3, and SPRY4 (By similarity). Interacts with IGFBP5; this interaction allows trafficking of IGFBP5 from the plasma membrane to the nucleus (By similarity).</text>
</comment>
<comment type="subcellular location">
    <subcellularLocation>
        <location evidence="1">Golgi apparatus membrane</location>
        <topology evidence="1">Peripheral membrane protein</topology>
    </subcellularLocation>
    <subcellularLocation>
        <location evidence="1">Cell membrane</location>
        <topology evidence="1">Peripheral membrane protein</topology>
    </subcellularLocation>
    <subcellularLocation>
        <location evidence="3">Membrane</location>
        <location evidence="3">Caveola</location>
        <topology evidence="1">Peripheral membrane protein</topology>
    </subcellularLocation>
    <subcellularLocation>
        <location evidence="4">Membrane raft</location>
    </subcellularLocation>
    <text evidence="1">Colocalized with DPP4 in membrane rafts. Potential hairpin-like structure in the membrane. Membrane protein of caveolae (By similarity).</text>
</comment>
<comment type="PTM">
    <text evidence="4">Phosphorylated at Tyr-14 by ABL1 in response to oxidative stress.</text>
</comment>
<comment type="PTM">
    <text evidence="4">Ubiquitinated. Undergo monoubiquitination and multi- and/or polyubiquitination. Monoubiquitination of N-terminal lysines promotes integration in a ternary complex with UBXN6 and VCP which promotes oligomeric CAV1 targeting to lysosomes for degradation. Ubiquitinated by ZNRF1; leading to degradation and modulation of the TLR4-mediated immune response.</text>
</comment>
<comment type="similarity">
    <text evidence="7">Belongs to the caveolin family.</text>
</comment>
<name>CAV1_GORGO</name>
<keyword id="KW-0007">Acetylation</keyword>
<keyword id="KW-1003">Cell membrane</keyword>
<keyword id="KW-0333">Golgi apparatus</keyword>
<keyword id="KW-1017">Isopeptide bond</keyword>
<keyword id="KW-0449">Lipoprotein</keyword>
<keyword id="KW-0472">Membrane</keyword>
<keyword id="KW-0564">Palmitate</keyword>
<keyword id="KW-0597">Phosphoprotein</keyword>
<keyword id="KW-1185">Reference proteome</keyword>
<keyword id="KW-0832">Ubl conjugation</keyword>
<accession>Q2IBF0</accession>
<evidence type="ECO:0000250" key="1"/>
<evidence type="ECO:0000250" key="2">
    <source>
        <dbReference type="UniProtKB" id="P41350"/>
    </source>
</evidence>
<evidence type="ECO:0000250" key="3">
    <source>
        <dbReference type="UniProtKB" id="P49817"/>
    </source>
</evidence>
<evidence type="ECO:0000250" key="4">
    <source>
        <dbReference type="UniProtKB" id="Q03135"/>
    </source>
</evidence>
<evidence type="ECO:0000250" key="5">
    <source>
        <dbReference type="UniProtKB" id="Q2IBA5"/>
    </source>
</evidence>
<evidence type="ECO:0000255" key="6"/>
<evidence type="ECO:0000305" key="7"/>
<proteinExistence type="inferred from homology"/>
<protein>
    <recommendedName>
        <fullName>Caveolin-1</fullName>
    </recommendedName>
</protein>
<organism>
    <name type="scientific">Gorilla gorilla gorilla</name>
    <name type="common">Western lowland gorilla</name>
    <dbReference type="NCBI Taxonomy" id="9595"/>
    <lineage>
        <taxon>Eukaryota</taxon>
        <taxon>Metazoa</taxon>
        <taxon>Chordata</taxon>
        <taxon>Craniata</taxon>
        <taxon>Vertebrata</taxon>
        <taxon>Euteleostomi</taxon>
        <taxon>Mammalia</taxon>
        <taxon>Eutheria</taxon>
        <taxon>Euarchontoglires</taxon>
        <taxon>Primates</taxon>
        <taxon>Haplorrhini</taxon>
        <taxon>Catarrhini</taxon>
        <taxon>Hominidae</taxon>
        <taxon>Gorilla</taxon>
    </lineage>
</organism>
<reference key="1">
    <citation type="submission" date="2006-01" db="EMBL/GenBank/DDBJ databases">
        <title>NISC comparative sequencing initiative.</title>
        <authorList>
            <person name="Antonellis A."/>
            <person name="Ayele K."/>
            <person name="Benjamin B."/>
            <person name="Blakesley R.W."/>
            <person name="Boakye A."/>
            <person name="Bouffard G.G."/>
            <person name="Brinkley C."/>
            <person name="Brooks S."/>
            <person name="Chu G."/>
            <person name="Coleman H."/>
            <person name="Engle J."/>
            <person name="Gestole M."/>
            <person name="Greene A."/>
            <person name="Guan X."/>
            <person name="Gupta J."/>
            <person name="Haghighi P."/>
            <person name="Han J."/>
            <person name="Hansen N."/>
            <person name="Ho S.-L."/>
            <person name="Hu P."/>
            <person name="Hunter G."/>
            <person name="Hurle B."/>
            <person name="Idol J.R."/>
            <person name="Kwong P."/>
            <person name="Laric P."/>
            <person name="Larson S."/>
            <person name="Lee-Lin S.-Q."/>
            <person name="Legaspi R."/>
            <person name="Madden M."/>
            <person name="Maduro Q.L."/>
            <person name="Maduro V.B."/>
            <person name="Margulies E.H."/>
            <person name="Masiello C."/>
            <person name="Maskeri B."/>
            <person name="McDowell J."/>
            <person name="Mojidi H.A."/>
            <person name="Mullikin J.C."/>
            <person name="Oestreicher J.S."/>
            <person name="Park M."/>
            <person name="Portnoy M.E."/>
            <person name="Prasad A."/>
            <person name="Puri O."/>
            <person name="Reddix-Dugue N."/>
            <person name="Schandler K."/>
            <person name="Schueler M.G."/>
            <person name="Sison C."/>
            <person name="Stantripop S."/>
            <person name="Stephen E."/>
            <person name="Taye A."/>
            <person name="Thomas J.W."/>
            <person name="Thomas P.J."/>
            <person name="Tsipouri V."/>
            <person name="Ung L."/>
            <person name="Vogt J.L."/>
            <person name="Wetherby K.D."/>
            <person name="Young A."/>
            <person name="Green E.D."/>
        </authorList>
    </citation>
    <scope>NUCLEOTIDE SEQUENCE [LARGE SCALE GENOMIC DNA]</scope>
</reference>
<feature type="initiator methionine" description="Removed" evidence="4">
    <location>
        <position position="1"/>
    </location>
</feature>
<feature type="chain" id="PRO_0000235204" description="Caveolin-1">
    <location>
        <begin position="2"/>
        <end position="178"/>
    </location>
</feature>
<feature type="topological domain" description="Cytoplasmic" evidence="6">
    <location>
        <begin position="2"/>
        <end position="104"/>
    </location>
</feature>
<feature type="intramembrane region" description="Helical" evidence="6">
    <location>
        <begin position="105"/>
        <end position="125"/>
    </location>
</feature>
<feature type="topological domain" description="Cytoplasmic" evidence="6">
    <location>
        <begin position="126"/>
        <end position="178"/>
    </location>
</feature>
<feature type="region of interest" description="Required for homooligomerization" evidence="4">
    <location>
        <begin position="2"/>
        <end position="94"/>
    </location>
</feature>
<feature type="region of interest" description="Interaction with CAVIN3" evidence="4">
    <location>
        <begin position="82"/>
        <end position="94"/>
    </location>
</feature>
<feature type="region of interest" description="Interacts with SPRY1, SPRY2, SPRY3 and SPRY4" evidence="3">
    <location>
        <begin position="131"/>
        <end position="142"/>
    </location>
</feature>
<feature type="region of interest" description="Interacts with SPRY1, SPRY2, and SPRY4" evidence="3">
    <location>
        <begin position="149"/>
        <end position="160"/>
    </location>
</feature>
<feature type="region of interest" description="Interacts with SPRY1, SPRY2, SPRY3 and SPRY4" evidence="3">
    <location>
        <begin position="167"/>
        <end position="178"/>
    </location>
</feature>
<feature type="modified residue" description="N-acetylserine" evidence="4">
    <location>
        <position position="2"/>
    </location>
</feature>
<feature type="modified residue" description="Phosphoserine" evidence="2">
    <location>
        <position position="2"/>
    </location>
</feature>
<feature type="modified residue" description="N6-acetyllysine; alternate" evidence="4">
    <location>
        <position position="5"/>
    </location>
</feature>
<feature type="modified residue" description="Phosphotyrosine" evidence="4">
    <location>
        <position position="6"/>
    </location>
</feature>
<feature type="modified residue" description="Phosphoserine" evidence="3">
    <location>
        <position position="9"/>
    </location>
</feature>
<feature type="modified residue" description="Phosphotyrosine; by ABL1" evidence="3">
    <location>
        <position position="14"/>
    </location>
</feature>
<feature type="modified residue" description="Phosphotyrosine" evidence="4">
    <location>
        <position position="25"/>
    </location>
</feature>
<feature type="modified residue" description="Phosphoserine" evidence="4">
    <location>
        <position position="37"/>
    </location>
</feature>
<feature type="lipid moiety-binding region" description="S-palmitoyl cysteine" evidence="1">
    <location>
        <position position="133"/>
    </location>
</feature>
<feature type="lipid moiety-binding region" description="S-palmitoyl cysteine" evidence="1">
    <location>
        <position position="143"/>
    </location>
</feature>
<feature type="lipid moiety-binding region" description="S-palmitoyl cysteine" evidence="1">
    <location>
        <position position="156"/>
    </location>
</feature>
<feature type="cross-link" description="Glycyl lysine isopeptide (Lys-Gly) (interchain with G-Cter in ubiquitin); alternate" evidence="4">
    <location>
        <position position="5"/>
    </location>
</feature>
<feature type="cross-link" description="Glycyl lysine isopeptide (Lys-Gly) (interchain with G-Cter in ubiquitin)" evidence="4">
    <location>
        <position position="26"/>
    </location>
</feature>
<feature type="cross-link" description="Glycyl lysine isopeptide (Lys-Gly) (interchain with G-Cter in ubiquitin)" evidence="4">
    <location>
        <position position="30"/>
    </location>
</feature>
<feature type="cross-link" description="Glycyl lysine isopeptide (Lys-Gly) (interchain with G-Cter in ubiquitin)" evidence="4">
    <location>
        <position position="39"/>
    </location>
</feature>
<feature type="cross-link" description="Glycyl lysine isopeptide (Lys-Gly) (interchain with G-Cter in ubiquitin)" evidence="4">
    <location>
        <position position="47"/>
    </location>
</feature>
<feature type="cross-link" description="Glycyl lysine isopeptide (Lys-Gly) (interchain with G-Cter in ubiquitin)" evidence="4">
    <location>
        <position position="57"/>
    </location>
</feature>
<dbReference type="EMBL" id="DP000025">
    <property type="protein sequence ID" value="ABC87448.1"/>
    <property type="molecule type" value="Genomic_DNA"/>
</dbReference>
<dbReference type="RefSeq" id="XP_018886590.1">
    <property type="nucleotide sequence ID" value="XM_019031045.4"/>
</dbReference>
<dbReference type="SMR" id="Q2IBF0"/>
<dbReference type="FunCoup" id="Q2IBF0">
    <property type="interactions" value="1854"/>
</dbReference>
<dbReference type="STRING" id="9593.ENSGGOP00000022437"/>
<dbReference type="GeneID" id="101125469"/>
<dbReference type="KEGG" id="ggo:101125469"/>
<dbReference type="CTD" id="857"/>
<dbReference type="eggNOG" id="ENOG502QUK5">
    <property type="taxonomic scope" value="Eukaryota"/>
</dbReference>
<dbReference type="HOGENOM" id="CLU_102582_0_0_1"/>
<dbReference type="InParanoid" id="Q2IBF0"/>
<dbReference type="OrthoDB" id="1380at9604"/>
<dbReference type="Proteomes" id="UP000001519">
    <property type="component" value="Unplaced"/>
</dbReference>
<dbReference type="GO" id="GO:0005901">
    <property type="term" value="C:caveola"/>
    <property type="evidence" value="ECO:0000250"/>
    <property type="project" value="UniProtKB"/>
</dbReference>
<dbReference type="GO" id="GO:0031410">
    <property type="term" value="C:cytoplasmic vesicle"/>
    <property type="evidence" value="ECO:0000318"/>
    <property type="project" value="GO_Central"/>
</dbReference>
<dbReference type="GO" id="GO:0005768">
    <property type="term" value="C:endosome"/>
    <property type="evidence" value="ECO:0000250"/>
    <property type="project" value="UniProtKB"/>
</dbReference>
<dbReference type="GO" id="GO:0005794">
    <property type="term" value="C:Golgi apparatus"/>
    <property type="evidence" value="ECO:0000318"/>
    <property type="project" value="GO_Central"/>
</dbReference>
<dbReference type="GO" id="GO:0000139">
    <property type="term" value="C:Golgi membrane"/>
    <property type="evidence" value="ECO:0007669"/>
    <property type="project" value="UniProtKB-SubCell"/>
</dbReference>
<dbReference type="GO" id="GO:0045121">
    <property type="term" value="C:membrane raft"/>
    <property type="evidence" value="ECO:0000250"/>
    <property type="project" value="UniProtKB"/>
</dbReference>
<dbReference type="GO" id="GO:0048471">
    <property type="term" value="C:perinuclear region of cytoplasm"/>
    <property type="evidence" value="ECO:0000318"/>
    <property type="project" value="GO_Central"/>
</dbReference>
<dbReference type="GO" id="GO:0060090">
    <property type="term" value="F:molecular adaptor activity"/>
    <property type="evidence" value="ECO:0000318"/>
    <property type="project" value="GO_Central"/>
</dbReference>
<dbReference type="GO" id="GO:0008142">
    <property type="term" value="F:oxysterol binding"/>
    <property type="evidence" value="ECO:0000250"/>
    <property type="project" value="UniProtKB"/>
</dbReference>
<dbReference type="GO" id="GO:0019901">
    <property type="term" value="F:protein kinase binding"/>
    <property type="evidence" value="ECO:0000318"/>
    <property type="project" value="GO_Central"/>
</dbReference>
<dbReference type="GO" id="GO:0044325">
    <property type="term" value="F:transmembrane transporter binding"/>
    <property type="evidence" value="ECO:0000318"/>
    <property type="project" value="GO_Central"/>
</dbReference>
<dbReference type="GO" id="GO:0070836">
    <property type="term" value="P:caveola assembly"/>
    <property type="evidence" value="ECO:0000318"/>
    <property type="project" value="GO_Central"/>
</dbReference>
<dbReference type="GO" id="GO:0030154">
    <property type="term" value="P:cell differentiation"/>
    <property type="evidence" value="ECO:0000318"/>
    <property type="project" value="GO_Central"/>
</dbReference>
<dbReference type="GO" id="GO:0090090">
    <property type="term" value="P:negative regulation of canonical Wnt signaling pathway"/>
    <property type="evidence" value="ECO:0000250"/>
    <property type="project" value="UniProtKB"/>
</dbReference>
<dbReference type="GO" id="GO:0001937">
    <property type="term" value="P:negative regulation of endothelial cell proliferation"/>
    <property type="evidence" value="ECO:0000318"/>
    <property type="project" value="GO_Central"/>
</dbReference>
<dbReference type="GO" id="GO:0000122">
    <property type="term" value="P:negative regulation of transcription by RNA polymerase II"/>
    <property type="evidence" value="ECO:0000250"/>
    <property type="project" value="UniProtKB"/>
</dbReference>
<dbReference type="GO" id="GO:0031623">
    <property type="term" value="P:receptor internalization"/>
    <property type="evidence" value="ECO:0000250"/>
    <property type="project" value="UniProtKB"/>
</dbReference>
<dbReference type="GO" id="GO:0051480">
    <property type="term" value="P:regulation of cytosolic calcium ion concentration"/>
    <property type="evidence" value="ECO:0000318"/>
    <property type="project" value="GO_Central"/>
</dbReference>
<dbReference type="GO" id="GO:0031295">
    <property type="term" value="P:T cell costimulation"/>
    <property type="evidence" value="ECO:0000250"/>
    <property type="project" value="UniProtKB"/>
</dbReference>
<dbReference type="InterPro" id="IPR001612">
    <property type="entry name" value="Caveolin"/>
</dbReference>
<dbReference type="InterPro" id="IPR018361">
    <property type="entry name" value="Caveolin_CS"/>
</dbReference>
<dbReference type="PANTHER" id="PTHR10844">
    <property type="entry name" value="CAVEOLIN"/>
    <property type="match status" value="1"/>
</dbReference>
<dbReference type="PANTHER" id="PTHR10844:SF18">
    <property type="entry name" value="CAVEOLIN-1"/>
    <property type="match status" value="1"/>
</dbReference>
<dbReference type="Pfam" id="PF01146">
    <property type="entry name" value="Caveolin"/>
    <property type="match status" value="1"/>
</dbReference>
<dbReference type="PROSITE" id="PS01210">
    <property type="entry name" value="CAVEOLIN"/>
    <property type="match status" value="1"/>
</dbReference>
<sequence length="178" mass="20472">MSGGKYVDSEGHLYTVPIREQGNIYKPNNKAMADELSEKQVYDAHTKEIDLVNRDPKHLNDDVVKIDFEDVIAEPEGTHSFDGIWKASFTTFTVTKYWFYRLLSALFGIPMALIWGIYFAILSFLHIWAVVPCIKSFLIEIQCISRVYSIYVHTVCDPLFEAVGKIFSNVRINLQKEI</sequence>
<gene>
    <name type="primary">CAV1</name>
</gene>